<evidence type="ECO:0000255" key="1">
    <source>
        <dbReference type="HAMAP-Rule" id="MF_01698"/>
    </source>
</evidence>
<comment type="function">
    <text evidence="1">Catalyzes the transfer of acetyl from acetyl-CoA to desacetylmycothiol (Cys-GlcN-Ins) to form mycothiol.</text>
</comment>
<comment type="catalytic activity">
    <reaction evidence="1">
        <text>1D-myo-inositol 2-(L-cysteinylamino)-2-deoxy-alpha-D-glucopyranoside + acetyl-CoA = mycothiol + CoA + H(+)</text>
        <dbReference type="Rhea" id="RHEA:26172"/>
        <dbReference type="ChEBI" id="CHEBI:15378"/>
        <dbReference type="ChEBI" id="CHEBI:16768"/>
        <dbReference type="ChEBI" id="CHEBI:57287"/>
        <dbReference type="ChEBI" id="CHEBI:57288"/>
        <dbReference type="ChEBI" id="CHEBI:58887"/>
        <dbReference type="EC" id="2.3.1.189"/>
    </reaction>
</comment>
<comment type="subunit">
    <text evidence="1">Monomer.</text>
</comment>
<comment type="similarity">
    <text evidence="1">Belongs to the acetyltransferase family. MshD subfamily.</text>
</comment>
<feature type="chain" id="PRO_0000400235" description="Mycothiol acetyltransferase">
    <location>
        <begin position="1"/>
        <end position="327"/>
    </location>
</feature>
<feature type="domain" description="N-acetyltransferase 1" evidence="1">
    <location>
        <begin position="11"/>
        <end position="159"/>
    </location>
</feature>
<feature type="domain" description="N-acetyltransferase 2" evidence="1">
    <location>
        <begin position="162"/>
        <end position="327"/>
    </location>
</feature>
<feature type="binding site" evidence="1">
    <location>
        <position position="42"/>
    </location>
    <ligand>
        <name>1D-myo-inositol 2-(L-cysteinylamino)-2-deoxy-alpha-D-glucopyranoside</name>
        <dbReference type="ChEBI" id="CHEBI:58887"/>
    </ligand>
</feature>
<feature type="binding site" evidence="1">
    <location>
        <begin position="89"/>
        <end position="91"/>
    </location>
    <ligand>
        <name>acetyl-CoA</name>
        <dbReference type="ChEBI" id="CHEBI:57288"/>
        <label>1</label>
    </ligand>
</feature>
<feature type="binding site" evidence="1">
    <location>
        <position position="189"/>
    </location>
    <ligand>
        <name>1D-myo-inositol 2-(L-cysteinylamino)-2-deoxy-alpha-D-glucopyranoside</name>
        <dbReference type="ChEBI" id="CHEBI:58887"/>
    </ligand>
</feature>
<feature type="binding site" evidence="1">
    <location>
        <position position="228"/>
    </location>
    <ligand>
        <name>1D-myo-inositol 2-(L-cysteinylamino)-2-deoxy-alpha-D-glucopyranoside</name>
        <dbReference type="ChEBI" id="CHEBI:58887"/>
    </ligand>
</feature>
<feature type="binding site" evidence="1">
    <location>
        <position position="251"/>
    </location>
    <ligand>
        <name>1D-myo-inositol 2-(L-cysteinylamino)-2-deoxy-alpha-D-glucopyranoside</name>
        <dbReference type="ChEBI" id="CHEBI:58887"/>
    </ligand>
</feature>
<feature type="binding site" evidence="1">
    <location>
        <begin position="255"/>
        <end position="257"/>
    </location>
    <ligand>
        <name>acetyl-CoA</name>
        <dbReference type="ChEBI" id="CHEBI:57288"/>
        <label>2</label>
    </ligand>
</feature>
<feature type="binding site" evidence="1">
    <location>
        <begin position="262"/>
        <end position="268"/>
    </location>
    <ligand>
        <name>acetyl-CoA</name>
        <dbReference type="ChEBI" id="CHEBI:57288"/>
        <label>2</label>
    </ligand>
</feature>
<feature type="binding site" evidence="1">
    <location>
        <position position="289"/>
    </location>
    <ligand>
        <name>1D-myo-inositol 2-(L-cysteinylamino)-2-deoxy-alpha-D-glucopyranoside</name>
        <dbReference type="ChEBI" id="CHEBI:58887"/>
    </ligand>
</feature>
<feature type="binding site" evidence="1">
    <location>
        <begin position="294"/>
        <end position="299"/>
    </location>
    <ligand>
        <name>acetyl-CoA</name>
        <dbReference type="ChEBI" id="CHEBI:57288"/>
        <label>2</label>
    </ligand>
</feature>
<reference key="1">
    <citation type="journal article" date="2009" name="Genome Res.">
        <title>Complete genome of the cellulolytic thermophile Acidothermus cellulolyticus 11B provides insights into its ecophysiological and evolutionary adaptations.</title>
        <authorList>
            <person name="Barabote R.D."/>
            <person name="Xie G."/>
            <person name="Leu D.H."/>
            <person name="Normand P."/>
            <person name="Necsulea A."/>
            <person name="Daubin V."/>
            <person name="Medigue C."/>
            <person name="Adney W.S."/>
            <person name="Xu X.C."/>
            <person name="Lapidus A."/>
            <person name="Parales R.E."/>
            <person name="Detter C."/>
            <person name="Pujic P."/>
            <person name="Bruce D."/>
            <person name="Lavire C."/>
            <person name="Challacombe J.F."/>
            <person name="Brettin T.S."/>
            <person name="Berry A.M."/>
        </authorList>
    </citation>
    <scope>NUCLEOTIDE SEQUENCE [LARGE SCALE GENOMIC DNA]</scope>
    <source>
        <strain>ATCC 43068 / DSM 8971 / 11B</strain>
    </source>
</reference>
<gene>
    <name evidence="1" type="primary">mshD</name>
    <name type="ordered locus">Acel_2026</name>
</gene>
<proteinExistence type="inferred from homology"/>
<sequence>MTVLPASIRIEPHGRLAPALLPRVFALVDDATDTDGVQPLSEHVVLHLRYGGDERGCNLLLWVDDDEPRLAGYAHLDATDPVEAPSAELVIAPDFRGRGLGTMLVEAILARTGGRLRLWAHGELPAAQAMARRLGFARRRVLLQMRRDLFAPLPPVTLPDDVQIRTFRPGADDDAWIALNARAFADHPEQGSWTLEDLHRRMQESWFDPDGFFLAERDGELVGFHWTKVHGSPAGQASNGSSGHGHEPLGEVYILGVDPKAQGLGLGRALTIVGLRYLRSRRLPHVMLYVDATNAPAIRLYESLGFRHWGTDVLFERGGTANGEGTS</sequence>
<keyword id="KW-0012">Acyltransferase</keyword>
<keyword id="KW-1185">Reference proteome</keyword>
<keyword id="KW-0677">Repeat</keyword>
<keyword id="KW-0808">Transferase</keyword>
<protein>
    <recommendedName>
        <fullName evidence="1">Mycothiol acetyltransferase</fullName>
        <shortName evidence="1">MSH acetyltransferase</shortName>
        <ecNumber evidence="1">2.3.1.189</ecNumber>
    </recommendedName>
    <alternativeName>
        <fullName evidence="1">Mycothiol synthase</fullName>
    </alternativeName>
</protein>
<name>MSHD_ACIC1</name>
<dbReference type="EC" id="2.3.1.189" evidence="1"/>
<dbReference type="EMBL" id="CP000481">
    <property type="protein sequence ID" value="ABK53798.1"/>
    <property type="molecule type" value="Genomic_DNA"/>
</dbReference>
<dbReference type="RefSeq" id="WP_011720861.1">
    <property type="nucleotide sequence ID" value="NC_008578.1"/>
</dbReference>
<dbReference type="SMR" id="A0LWI8"/>
<dbReference type="STRING" id="351607.Acel_2026"/>
<dbReference type="KEGG" id="ace:Acel_2026"/>
<dbReference type="eggNOG" id="COG0454">
    <property type="taxonomic scope" value="Bacteria"/>
</dbReference>
<dbReference type="eggNOG" id="COG0456">
    <property type="taxonomic scope" value="Bacteria"/>
</dbReference>
<dbReference type="HOGENOM" id="CLU_068014_0_0_11"/>
<dbReference type="InParanoid" id="A0LWI8"/>
<dbReference type="Proteomes" id="UP000008221">
    <property type="component" value="Chromosome"/>
</dbReference>
<dbReference type="GO" id="GO:0035447">
    <property type="term" value="F:mycothiol synthase activity"/>
    <property type="evidence" value="ECO:0007669"/>
    <property type="project" value="UniProtKB-UniRule"/>
</dbReference>
<dbReference type="GO" id="GO:0010125">
    <property type="term" value="P:mycothiol biosynthetic process"/>
    <property type="evidence" value="ECO:0007669"/>
    <property type="project" value="UniProtKB-UniRule"/>
</dbReference>
<dbReference type="CDD" id="cd04301">
    <property type="entry name" value="NAT_SF"/>
    <property type="match status" value="2"/>
</dbReference>
<dbReference type="Gene3D" id="3.40.630.30">
    <property type="match status" value="1"/>
</dbReference>
<dbReference type="HAMAP" id="MF_01698">
    <property type="entry name" value="MshD"/>
    <property type="match status" value="1"/>
</dbReference>
<dbReference type="InterPro" id="IPR016181">
    <property type="entry name" value="Acyl_CoA_acyltransferase"/>
</dbReference>
<dbReference type="InterPro" id="IPR050832">
    <property type="entry name" value="Bact_Acetyltransf"/>
</dbReference>
<dbReference type="InterPro" id="IPR000182">
    <property type="entry name" value="GNAT_dom"/>
</dbReference>
<dbReference type="InterPro" id="IPR017813">
    <property type="entry name" value="Mycothiol_AcTrfase"/>
</dbReference>
<dbReference type="NCBIfam" id="TIGR03448">
    <property type="entry name" value="mycothiol_MshD"/>
    <property type="match status" value="1"/>
</dbReference>
<dbReference type="PANTHER" id="PTHR43877:SF2">
    <property type="entry name" value="AMINOALKYLPHOSPHONATE N-ACETYLTRANSFERASE-RELATED"/>
    <property type="match status" value="1"/>
</dbReference>
<dbReference type="PANTHER" id="PTHR43877">
    <property type="entry name" value="AMINOALKYLPHOSPHONATE N-ACETYLTRANSFERASE-RELATED-RELATED"/>
    <property type="match status" value="1"/>
</dbReference>
<dbReference type="Pfam" id="PF00583">
    <property type="entry name" value="Acetyltransf_1"/>
    <property type="match status" value="2"/>
</dbReference>
<dbReference type="PIRSF" id="PIRSF021524">
    <property type="entry name" value="MSH_acetyltransferase"/>
    <property type="match status" value="1"/>
</dbReference>
<dbReference type="SUPFAM" id="SSF55729">
    <property type="entry name" value="Acyl-CoA N-acyltransferases (Nat)"/>
    <property type="match status" value="1"/>
</dbReference>
<dbReference type="PROSITE" id="PS51186">
    <property type="entry name" value="GNAT"/>
    <property type="match status" value="2"/>
</dbReference>
<organism>
    <name type="scientific">Acidothermus cellulolyticus (strain ATCC 43068 / DSM 8971 / 11B)</name>
    <dbReference type="NCBI Taxonomy" id="351607"/>
    <lineage>
        <taxon>Bacteria</taxon>
        <taxon>Bacillati</taxon>
        <taxon>Actinomycetota</taxon>
        <taxon>Actinomycetes</taxon>
        <taxon>Acidothermales</taxon>
        <taxon>Acidothermaceae</taxon>
        <taxon>Acidothermus</taxon>
    </lineage>
</organism>
<accession>A0LWI8</accession>